<gene>
    <name evidence="1" type="primary">leuD</name>
    <name type="ordered locus">Mpe_A2163</name>
</gene>
<proteinExistence type="inferred from homology"/>
<keyword id="KW-0028">Amino-acid biosynthesis</keyword>
<keyword id="KW-0100">Branched-chain amino acid biosynthesis</keyword>
<keyword id="KW-0432">Leucine biosynthesis</keyword>
<keyword id="KW-0456">Lyase</keyword>
<keyword id="KW-1185">Reference proteome</keyword>
<sequence length="216" mass="24515">MQPFRLHRGVVAPIDRENVDTDAIIPKQFLKSIKRSGFGVNLFDEWRYLDHGEPGQDPASRRPNPDFVLNQPRYRGASVLLARRNFGCGSSREHAPWAIDQYGFRALIAPSFADIFFNNCFKNGLLPIVLPEAQVARLFDEVAAFPGYELTIDLERQVVVKPDGDELAFDVEPFRRHCLLGGLDDIGLTLRHADKIRAYEAERLLRKPWLANTLAS</sequence>
<protein>
    <recommendedName>
        <fullName evidence="1">3-isopropylmalate dehydratase small subunit</fullName>
        <ecNumber evidence="1">4.2.1.33</ecNumber>
    </recommendedName>
    <alternativeName>
        <fullName evidence="1">Alpha-IPM isomerase</fullName>
        <shortName evidence="1">IPMI</shortName>
    </alternativeName>
    <alternativeName>
        <fullName evidence="1">Isopropylmalate isomerase</fullName>
    </alternativeName>
</protein>
<evidence type="ECO:0000255" key="1">
    <source>
        <dbReference type="HAMAP-Rule" id="MF_01031"/>
    </source>
</evidence>
<reference key="1">
    <citation type="journal article" date="2007" name="J. Bacteriol.">
        <title>Whole-genome analysis of the methyl tert-butyl ether-degrading beta-proteobacterium Methylibium petroleiphilum PM1.</title>
        <authorList>
            <person name="Kane S.R."/>
            <person name="Chakicherla A.Y."/>
            <person name="Chain P.S.G."/>
            <person name="Schmidt R."/>
            <person name="Shin M.W."/>
            <person name="Legler T.C."/>
            <person name="Scow K.M."/>
            <person name="Larimer F.W."/>
            <person name="Lucas S.M."/>
            <person name="Richardson P.M."/>
            <person name="Hristova K.R."/>
        </authorList>
    </citation>
    <scope>NUCLEOTIDE SEQUENCE [LARGE SCALE GENOMIC DNA]</scope>
    <source>
        <strain>ATCC BAA-1232 / LMG 22953 / PM1</strain>
    </source>
</reference>
<feature type="chain" id="PRO_1000063786" description="3-isopropylmalate dehydratase small subunit">
    <location>
        <begin position="1"/>
        <end position="216"/>
    </location>
</feature>
<dbReference type="EC" id="4.2.1.33" evidence="1"/>
<dbReference type="EMBL" id="CP000555">
    <property type="protein sequence ID" value="ABM95119.1"/>
    <property type="molecule type" value="Genomic_DNA"/>
</dbReference>
<dbReference type="RefSeq" id="WP_011829756.1">
    <property type="nucleotide sequence ID" value="NC_008825.1"/>
</dbReference>
<dbReference type="SMR" id="A2SHT0"/>
<dbReference type="STRING" id="420662.Mpe_A2163"/>
<dbReference type="KEGG" id="mpt:Mpe_A2163"/>
<dbReference type="eggNOG" id="COG0066">
    <property type="taxonomic scope" value="Bacteria"/>
</dbReference>
<dbReference type="HOGENOM" id="CLU_081378_0_3_4"/>
<dbReference type="UniPathway" id="UPA00048">
    <property type="reaction ID" value="UER00071"/>
</dbReference>
<dbReference type="Proteomes" id="UP000000366">
    <property type="component" value="Chromosome"/>
</dbReference>
<dbReference type="GO" id="GO:0009316">
    <property type="term" value="C:3-isopropylmalate dehydratase complex"/>
    <property type="evidence" value="ECO:0007669"/>
    <property type="project" value="InterPro"/>
</dbReference>
<dbReference type="GO" id="GO:0003861">
    <property type="term" value="F:3-isopropylmalate dehydratase activity"/>
    <property type="evidence" value="ECO:0007669"/>
    <property type="project" value="UniProtKB-UniRule"/>
</dbReference>
<dbReference type="GO" id="GO:0009098">
    <property type="term" value="P:L-leucine biosynthetic process"/>
    <property type="evidence" value="ECO:0007669"/>
    <property type="project" value="UniProtKB-UniRule"/>
</dbReference>
<dbReference type="CDD" id="cd01577">
    <property type="entry name" value="IPMI_Swivel"/>
    <property type="match status" value="1"/>
</dbReference>
<dbReference type="FunFam" id="3.20.19.10:FF:000003">
    <property type="entry name" value="3-isopropylmalate dehydratase small subunit"/>
    <property type="match status" value="1"/>
</dbReference>
<dbReference type="Gene3D" id="3.20.19.10">
    <property type="entry name" value="Aconitase, domain 4"/>
    <property type="match status" value="1"/>
</dbReference>
<dbReference type="HAMAP" id="MF_01031">
    <property type="entry name" value="LeuD_type1"/>
    <property type="match status" value="1"/>
</dbReference>
<dbReference type="InterPro" id="IPR004431">
    <property type="entry name" value="3-IsopropMal_deHydase_ssu"/>
</dbReference>
<dbReference type="InterPro" id="IPR015928">
    <property type="entry name" value="Aconitase/3IPM_dehydase_swvl"/>
</dbReference>
<dbReference type="InterPro" id="IPR000573">
    <property type="entry name" value="AconitaseA/IPMdHydase_ssu_swvl"/>
</dbReference>
<dbReference type="InterPro" id="IPR033940">
    <property type="entry name" value="IPMI_Swivel"/>
</dbReference>
<dbReference type="InterPro" id="IPR050075">
    <property type="entry name" value="LeuD"/>
</dbReference>
<dbReference type="NCBIfam" id="TIGR00171">
    <property type="entry name" value="leuD"/>
    <property type="match status" value="1"/>
</dbReference>
<dbReference type="NCBIfam" id="NF002458">
    <property type="entry name" value="PRK01641.1"/>
    <property type="match status" value="1"/>
</dbReference>
<dbReference type="PANTHER" id="PTHR43345:SF5">
    <property type="entry name" value="3-ISOPROPYLMALATE DEHYDRATASE SMALL SUBUNIT"/>
    <property type="match status" value="1"/>
</dbReference>
<dbReference type="PANTHER" id="PTHR43345">
    <property type="entry name" value="3-ISOPROPYLMALATE DEHYDRATASE SMALL SUBUNIT 2-RELATED-RELATED"/>
    <property type="match status" value="1"/>
</dbReference>
<dbReference type="Pfam" id="PF00694">
    <property type="entry name" value="Aconitase_C"/>
    <property type="match status" value="1"/>
</dbReference>
<dbReference type="SUPFAM" id="SSF52016">
    <property type="entry name" value="LeuD/IlvD-like"/>
    <property type="match status" value="1"/>
</dbReference>
<organism>
    <name type="scientific">Methylibium petroleiphilum (strain ATCC BAA-1232 / LMG 22953 / PM1)</name>
    <dbReference type="NCBI Taxonomy" id="420662"/>
    <lineage>
        <taxon>Bacteria</taxon>
        <taxon>Pseudomonadati</taxon>
        <taxon>Pseudomonadota</taxon>
        <taxon>Betaproteobacteria</taxon>
        <taxon>Burkholderiales</taxon>
        <taxon>Sphaerotilaceae</taxon>
        <taxon>Methylibium</taxon>
    </lineage>
</organism>
<accession>A2SHT0</accession>
<comment type="function">
    <text evidence="1">Catalyzes the isomerization between 2-isopropylmalate and 3-isopropylmalate, via the formation of 2-isopropylmaleate.</text>
</comment>
<comment type="catalytic activity">
    <reaction evidence="1">
        <text>(2R,3S)-3-isopropylmalate = (2S)-2-isopropylmalate</text>
        <dbReference type="Rhea" id="RHEA:32287"/>
        <dbReference type="ChEBI" id="CHEBI:1178"/>
        <dbReference type="ChEBI" id="CHEBI:35121"/>
        <dbReference type="EC" id="4.2.1.33"/>
    </reaction>
</comment>
<comment type="pathway">
    <text evidence="1">Amino-acid biosynthesis; L-leucine biosynthesis; L-leucine from 3-methyl-2-oxobutanoate: step 2/4.</text>
</comment>
<comment type="subunit">
    <text evidence="1">Heterodimer of LeuC and LeuD.</text>
</comment>
<comment type="similarity">
    <text evidence="1">Belongs to the LeuD family. LeuD type 1 subfamily.</text>
</comment>
<name>LEUD_METPP</name>